<reference key="1">
    <citation type="journal article" date="2010" name="J. Bacteriol.">
        <title>Genome sequence of the deep-rooted Yersinia pestis strain Angola reveals new insights into the evolution and pangenome of the plague bacterium.</title>
        <authorList>
            <person name="Eppinger M."/>
            <person name="Worsham P.L."/>
            <person name="Nikolich M.P."/>
            <person name="Riley D.R."/>
            <person name="Sebastian Y."/>
            <person name="Mou S."/>
            <person name="Achtman M."/>
            <person name="Lindler L.E."/>
            <person name="Ravel J."/>
        </authorList>
    </citation>
    <scope>NUCLEOTIDE SEQUENCE [LARGE SCALE GENOMIC DNA]</scope>
    <source>
        <strain>Angola</strain>
    </source>
</reference>
<dbReference type="EMBL" id="CP000901">
    <property type="protein sequence ID" value="ABX88302.1"/>
    <property type="molecule type" value="Genomic_DNA"/>
</dbReference>
<dbReference type="RefSeq" id="WP_002210113.1">
    <property type="nucleotide sequence ID" value="NZ_CP009935.1"/>
</dbReference>
<dbReference type="SMR" id="A9R1U0"/>
<dbReference type="GeneID" id="96663019"/>
<dbReference type="KEGG" id="ypg:YpAngola_A1156"/>
<dbReference type="PATRIC" id="fig|349746.12.peg.2109"/>
<dbReference type="GO" id="GO:0005524">
    <property type="term" value="F:ATP binding"/>
    <property type="evidence" value="ECO:0007669"/>
    <property type="project" value="UniProtKB-UniRule"/>
</dbReference>
<dbReference type="GO" id="GO:0005525">
    <property type="term" value="F:GTP binding"/>
    <property type="evidence" value="ECO:0007669"/>
    <property type="project" value="UniProtKB-UniRule"/>
</dbReference>
<dbReference type="GO" id="GO:0003723">
    <property type="term" value="F:RNA binding"/>
    <property type="evidence" value="ECO:0007669"/>
    <property type="project" value="UniProtKB-KW"/>
</dbReference>
<dbReference type="HAMAP" id="MF_00636">
    <property type="entry name" value="RapZ_like"/>
    <property type="match status" value="1"/>
</dbReference>
<dbReference type="InterPro" id="IPR027417">
    <property type="entry name" value="P-loop_NTPase"/>
</dbReference>
<dbReference type="InterPro" id="IPR005337">
    <property type="entry name" value="RapZ-like"/>
</dbReference>
<dbReference type="InterPro" id="IPR053930">
    <property type="entry name" value="RapZ-like_N"/>
</dbReference>
<dbReference type="InterPro" id="IPR053931">
    <property type="entry name" value="RapZ_C"/>
</dbReference>
<dbReference type="NCBIfam" id="NF003828">
    <property type="entry name" value="PRK05416.1"/>
    <property type="match status" value="1"/>
</dbReference>
<dbReference type="PANTHER" id="PTHR30448">
    <property type="entry name" value="RNASE ADAPTER PROTEIN RAPZ"/>
    <property type="match status" value="1"/>
</dbReference>
<dbReference type="PANTHER" id="PTHR30448:SF0">
    <property type="entry name" value="RNASE ADAPTER PROTEIN RAPZ"/>
    <property type="match status" value="1"/>
</dbReference>
<dbReference type="Pfam" id="PF22740">
    <property type="entry name" value="PapZ_C"/>
    <property type="match status" value="1"/>
</dbReference>
<dbReference type="Pfam" id="PF03668">
    <property type="entry name" value="RapZ-like_N"/>
    <property type="match status" value="1"/>
</dbReference>
<dbReference type="PIRSF" id="PIRSF005052">
    <property type="entry name" value="P-loopkin"/>
    <property type="match status" value="1"/>
</dbReference>
<dbReference type="SUPFAM" id="SSF52540">
    <property type="entry name" value="P-loop containing nucleoside triphosphate hydrolases"/>
    <property type="match status" value="1"/>
</dbReference>
<proteinExistence type="inferred from homology"/>
<accession>A9R1U0</accession>
<gene>
    <name evidence="1" type="primary">rapZ</name>
    <name type="ordered locus">YpAngola_A1156</name>
</gene>
<evidence type="ECO:0000255" key="1">
    <source>
        <dbReference type="HAMAP-Rule" id="MF_00636"/>
    </source>
</evidence>
<sequence length="284" mass="32533">MVLMIVSGRSGSGKSVALRALEDMGFYCVDNLPVVLLPQLASTLADRNISAAVSIDVRNMPESPEVFEHAMTQLPDSFSPQLLFLDADRNTLIRRYSDTRRLHPLSAKNLSLESAIDEESDLLEPLRSRADLIIDTSEMSVHELAEMLRTRLLGKRERELTMVFESFGFKHGIPIDADYVFDVRFLPNPHWDPKLRPMTGLDKPVISFLDRHTEVHNFIYQTRSYLEQWLPMLETNNRSYLTVAIGCTGGKHRSVYVAEQLADYFRARGKNVQSRHRTLEKRKQ</sequence>
<feature type="chain" id="PRO_1000130799" description="RNase adapter protein RapZ">
    <location>
        <begin position="1"/>
        <end position="284"/>
    </location>
</feature>
<feature type="region of interest" description="RNA-binding" evidence="1">
    <location>
        <begin position="266"/>
        <end position="284"/>
    </location>
</feature>
<feature type="binding site" evidence="1">
    <location>
        <begin position="8"/>
        <end position="15"/>
    </location>
    <ligand>
        <name>ATP</name>
        <dbReference type="ChEBI" id="CHEBI:30616"/>
    </ligand>
</feature>
<feature type="binding site" evidence="1">
    <location>
        <begin position="56"/>
        <end position="59"/>
    </location>
    <ligand>
        <name>GTP</name>
        <dbReference type="ChEBI" id="CHEBI:37565"/>
    </ligand>
</feature>
<keyword id="KW-0067">ATP-binding</keyword>
<keyword id="KW-0342">GTP-binding</keyword>
<keyword id="KW-0547">Nucleotide-binding</keyword>
<keyword id="KW-0694">RNA-binding</keyword>
<name>RAPZ_YERPG</name>
<comment type="function">
    <text evidence="1">Modulates the synthesis of GlmS, by affecting the processing and stability of the regulatory small RNA GlmZ. When glucosamine-6-phosphate (GlcN6P) concentrations are high in the cell, RapZ binds GlmZ and targets it to cleavage by RNase E. Consequently, GlmZ is inactivated and unable to activate GlmS synthesis. Under low GlcN6P concentrations, RapZ is sequestered and inactivated by an other regulatory small RNA, GlmY, preventing GlmZ degradation and leading to synthesis of GlmS.</text>
</comment>
<comment type="subunit">
    <text evidence="1">Homotrimer.</text>
</comment>
<comment type="similarity">
    <text evidence="1">Belongs to the RapZ-like family. RapZ subfamily.</text>
</comment>
<protein>
    <recommendedName>
        <fullName evidence="1">RNase adapter protein RapZ</fullName>
    </recommendedName>
</protein>
<organism>
    <name type="scientific">Yersinia pestis bv. Antiqua (strain Angola)</name>
    <dbReference type="NCBI Taxonomy" id="349746"/>
    <lineage>
        <taxon>Bacteria</taxon>
        <taxon>Pseudomonadati</taxon>
        <taxon>Pseudomonadota</taxon>
        <taxon>Gammaproteobacteria</taxon>
        <taxon>Enterobacterales</taxon>
        <taxon>Yersiniaceae</taxon>
        <taxon>Yersinia</taxon>
    </lineage>
</organism>